<gene>
    <name evidence="1 6" type="primary">trmH</name>
    <name evidence="8" type="ordered locus">TTHA0127</name>
</gene>
<feature type="chain" id="PRO_0000436160" description="tRNA (guanosine(18)-2'-O)-methyltransferase">
    <location>
        <begin position="1"/>
        <end position="194"/>
    </location>
</feature>
<feature type="binding site" evidence="1 3 9">
    <location>
        <position position="99"/>
    </location>
    <ligand>
        <name>S-adenosyl-L-methionine</name>
        <dbReference type="ChEBI" id="CHEBI:59789"/>
    </ligand>
</feature>
<feature type="binding site" evidence="1 3 9">
    <location>
        <begin position="122"/>
        <end position="126"/>
    </location>
    <ligand>
        <name>S-adenosyl-L-methionine</name>
        <dbReference type="ChEBI" id="CHEBI:59789"/>
    </ligand>
</feature>
<feature type="binding site" evidence="1 3 9">
    <location>
        <position position="142"/>
    </location>
    <ligand>
        <name>S-adenosyl-L-methionine</name>
        <dbReference type="ChEBI" id="CHEBI:59789"/>
    </ligand>
</feature>
<feature type="binding site" evidence="1 3 9">
    <location>
        <position position="151"/>
    </location>
    <ligand>
        <name>S-adenosyl-L-methionine</name>
        <dbReference type="ChEBI" id="CHEBI:59789"/>
    </ligand>
</feature>
<feature type="mutagenesis site" description="Lack of activity." evidence="3">
    <original>R</original>
    <variation>A</variation>
    <location>
        <position position="41"/>
    </location>
</feature>
<feature type="mutagenesis site" description="30-fold increase in Km for AdoMet." evidence="3">
    <original>R</original>
    <variation>K</variation>
    <location>
        <position position="41"/>
    </location>
</feature>
<feature type="mutagenesis site" description="Small increase in Km for AdoMet." evidence="3">
    <original>T</original>
    <variation>A</variation>
    <location>
        <position position="99"/>
    </location>
</feature>
<feature type="mutagenesis site" description="13-fold increase in Km for AdoMet." evidence="3">
    <original>L</original>
    <variation>A</variation>
    <location>
        <position position="101"/>
    </location>
</feature>
<feature type="mutagenesis site" description="2800-fold increase in Km for AdoMet." evidence="3">
    <original>E</original>
    <variation>A</variation>
    <location>
        <position position="124"/>
    </location>
</feature>
<feature type="mutagenesis site" description="Small increase in Km for AdoMet." evidence="3">
    <original>V</original>
    <variation>A</variation>
    <location>
        <position position="128"/>
    </location>
</feature>
<feature type="mutagenesis site" description="No change in Km for AdoMet." evidence="3">
    <original>I</original>
    <variation>A</variation>
    <location>
        <position position="142"/>
    </location>
</feature>
<feature type="mutagenesis site" description="15-fold increase in Km for AdoMet." evidence="3">
    <original>M</original>
    <variation>A</variation>
    <location>
        <position position="144"/>
    </location>
</feature>
<feature type="mutagenesis site" description="170-fold increase in Km for AdoMet." evidence="3">
    <original>S</original>
    <variation>A</variation>
    <location>
        <position position="150"/>
    </location>
</feature>
<feature type="mutagenesis site" description="Small increase in Km for AdoMet." evidence="3">
    <original>L</original>
    <variation>A</variation>
    <location>
        <position position="151"/>
    </location>
</feature>
<feature type="mutagenesis site" description="80-fold increase in Km for AdoMet." evidence="3">
    <original>N</original>
    <variation>A</variation>
    <location>
        <position position="152"/>
    </location>
</feature>
<feature type="helix" evidence="10">
    <location>
        <begin position="3"/>
        <end position="7"/>
    </location>
</feature>
<feature type="helix" evidence="10">
    <location>
        <begin position="8"/>
        <end position="16"/>
    </location>
</feature>
<feature type="strand" evidence="10">
    <location>
        <begin position="23"/>
        <end position="29"/>
    </location>
</feature>
<feature type="helix" evidence="10">
    <location>
        <begin position="33"/>
        <end position="45"/>
    </location>
</feature>
<feature type="strand" evidence="10">
    <location>
        <begin position="48"/>
        <end position="55"/>
    </location>
</feature>
<feature type="helix" evidence="10">
    <location>
        <begin position="56"/>
        <end position="59"/>
    </location>
</feature>
<feature type="helix" evidence="10">
    <location>
        <begin position="70"/>
        <end position="72"/>
    </location>
</feature>
<feature type="strand" evidence="10">
    <location>
        <begin position="74"/>
        <end position="81"/>
    </location>
</feature>
<feature type="helix" evidence="10">
    <location>
        <begin position="82"/>
        <end position="91"/>
    </location>
</feature>
<feature type="strand" evidence="10">
    <location>
        <begin position="95"/>
        <end position="99"/>
    </location>
</feature>
<feature type="strand" evidence="10">
    <location>
        <begin position="105"/>
        <end position="107"/>
    </location>
</feature>
<feature type="helix" evidence="10">
    <location>
        <begin position="108"/>
        <end position="110"/>
    </location>
</feature>
<feature type="strand" evidence="10">
    <location>
        <begin position="115"/>
        <end position="121"/>
    </location>
</feature>
<feature type="turn" evidence="10">
    <location>
        <begin position="124"/>
        <end position="126"/>
    </location>
</feature>
<feature type="helix" evidence="10">
    <location>
        <begin position="130"/>
        <end position="135"/>
    </location>
</feature>
<feature type="strand" evidence="10">
    <location>
        <begin position="136"/>
        <end position="141"/>
    </location>
</feature>
<feature type="helix" evidence="10">
    <location>
        <begin position="153"/>
        <end position="170"/>
    </location>
</feature>
<feature type="helix" evidence="10">
    <location>
        <begin position="173"/>
        <end position="175"/>
    </location>
</feature>
<feature type="helix" evidence="10">
    <location>
        <begin position="181"/>
        <end position="190"/>
    </location>
</feature>
<reference key="1">
    <citation type="journal article" date="2002" name="Genes Cells">
        <title>Identification and characterization of tRNA (Gm18) methyltransferase from Thermus thermophilus HB8: domain structure and conserved amino acid sequence motifs.</title>
        <authorList>
            <person name="Hori H."/>
            <person name="Suzuki T."/>
            <person name="Sugawara K."/>
            <person name="Inoue Y."/>
            <person name="Shibata T."/>
            <person name="Kuramitsu S."/>
            <person name="Yokoyama S."/>
            <person name="Oshima T."/>
            <person name="Watanabe K."/>
        </authorList>
    </citation>
    <scope>NUCLEOTIDE SEQUENCE [GENOMIC DNA]</scope>
    <scope>FUNCTION</scope>
    <scope>CATALYTIC ACTIVITY</scope>
    <source>
        <strain>ATCC 27634 / DSM 579 / HB8</strain>
    </source>
</reference>
<reference key="2">
    <citation type="submission" date="2004-11" db="EMBL/GenBank/DDBJ databases">
        <title>Complete genome sequence of Thermus thermophilus HB8.</title>
        <authorList>
            <person name="Masui R."/>
            <person name="Kurokawa K."/>
            <person name="Nakagawa N."/>
            <person name="Tokunaga F."/>
            <person name="Koyama Y."/>
            <person name="Shibata T."/>
            <person name="Oshima T."/>
            <person name="Yokoyama S."/>
            <person name="Yasunaga T."/>
            <person name="Kuramitsu S."/>
        </authorList>
    </citation>
    <scope>NUCLEOTIDE SEQUENCE [LARGE SCALE GENOMIC DNA]</scope>
    <source>
        <strain>ATCC 27634 / DSM 579 / HB8</strain>
    </source>
</reference>
<reference key="3">
    <citation type="journal article" date="2010" name="J. Biol. Chem.">
        <title>Flexible recognition of the tRNA G18 methylation target site by TrmH methyltransferase through first binding and induced fit processes.</title>
        <authorList>
            <person name="Ochi A."/>
            <person name="Makabe K."/>
            <person name="Kuwajima K."/>
            <person name="Hori H."/>
        </authorList>
    </citation>
    <scope>FUNCTION</scope>
    <scope>CATALYTIC ACTIVITY</scope>
    <scope>TRNA-BINDING</scope>
</reference>
<reference key="4">
    <citation type="journal article" date="2013" name="J. Biol. Chem.">
        <title>The catalytic domain of topological knot tRNA methyltransferase (TrmH) discriminates between substrate tRNA and nonsubstrate tRNA via an induced-fit process.</title>
        <authorList>
            <person name="Ochi A."/>
            <person name="Makabe K."/>
            <person name="Yamagami R."/>
            <person name="Hirata A."/>
            <person name="Sakaguchi R."/>
            <person name="Hou Y.M."/>
            <person name="Watanabe K."/>
            <person name="Nureki O."/>
            <person name="Kuwajima K."/>
            <person name="Hori H."/>
        </authorList>
    </citation>
    <scope>FUNCTION</scope>
    <scope>CATALYTIC ACTIVITY</scope>
    <scope>DOMAIN</scope>
    <scope>TRNA-BINDING</scope>
</reference>
<reference evidence="9" key="5">
    <citation type="journal article" date="2004" name="Structure">
        <title>Deep knot structure for construction of active site and cofactor binding site of tRNA modification enzyme.</title>
        <authorList>
            <person name="Nureki O."/>
            <person name="Watanabe K."/>
            <person name="Fukai S."/>
            <person name="Ishii R."/>
            <person name="Endo Y."/>
            <person name="Hori H."/>
            <person name="Yokoyama S."/>
        </authorList>
    </citation>
    <scope>X-RAY CRYSTALLOGRAPHY (1.50 ANGSTROMS) IN COMPLEX WITH S-ADENOSYL-L-METHIONINE</scope>
    <scope>FUNCTION</scope>
    <scope>CATALYTIC ACTIVITY</scope>
    <scope>BIOPHYSICOCHEMICAL PROPERTIES</scope>
    <scope>SUBUNIT</scope>
    <scope>MUTAGENESIS OF ARG-41; THR-99; LEU-101; GLU-124; VAL-128; ILE-142; MET-144; SER-150; LEU-151 AND ASN-152</scope>
</reference>
<accession>Q5SM16</accession>
<accession>Q9FAC4</accession>
<evidence type="ECO:0000255" key="1">
    <source>
        <dbReference type="HAMAP-Rule" id="MF_02060"/>
    </source>
</evidence>
<evidence type="ECO:0000269" key="2">
    <source>
    </source>
</evidence>
<evidence type="ECO:0000269" key="3">
    <source>
    </source>
</evidence>
<evidence type="ECO:0000269" key="4">
    <source>
    </source>
</evidence>
<evidence type="ECO:0000269" key="5">
    <source>
    </source>
</evidence>
<evidence type="ECO:0000303" key="6">
    <source>
    </source>
</evidence>
<evidence type="ECO:0000305" key="7"/>
<evidence type="ECO:0000312" key="8">
    <source>
        <dbReference type="EMBL" id="BAD69950.1"/>
    </source>
</evidence>
<evidence type="ECO:0007744" key="9">
    <source>
        <dbReference type="PDB" id="1V2X"/>
    </source>
</evidence>
<evidence type="ECO:0007829" key="10">
    <source>
        <dbReference type="PDB" id="1V2X"/>
    </source>
</evidence>
<name>TRMH_THET8</name>
<dbReference type="EC" id="2.1.1.34" evidence="1 2 3 4 5"/>
<dbReference type="EMBL" id="AB045130">
    <property type="protein sequence ID" value="BAB17605.1"/>
    <property type="molecule type" value="Genomic_DNA"/>
</dbReference>
<dbReference type="EMBL" id="AP008226">
    <property type="protein sequence ID" value="BAD69950.1"/>
    <property type="molecule type" value="Genomic_DNA"/>
</dbReference>
<dbReference type="RefSeq" id="WP_011174221.1">
    <property type="nucleotide sequence ID" value="NC_006461.1"/>
</dbReference>
<dbReference type="RefSeq" id="YP_143393.1">
    <property type="nucleotide sequence ID" value="NC_006461.1"/>
</dbReference>
<dbReference type="PDB" id="1V2X">
    <property type="method" value="X-ray"/>
    <property type="resolution" value="1.50 A"/>
    <property type="chains" value="A=1-194"/>
</dbReference>
<dbReference type="PDBsum" id="1V2X"/>
<dbReference type="SMR" id="Q5SM16"/>
<dbReference type="EnsemblBacteria" id="BAD69950">
    <property type="protein sequence ID" value="BAD69950"/>
    <property type="gene ID" value="BAD69950"/>
</dbReference>
<dbReference type="GeneID" id="3168939"/>
<dbReference type="KEGG" id="ttj:TTHA0127"/>
<dbReference type="PATRIC" id="fig|300852.9.peg.125"/>
<dbReference type="eggNOG" id="COG0566">
    <property type="taxonomic scope" value="Bacteria"/>
</dbReference>
<dbReference type="HOGENOM" id="CLU_021322_4_2_0"/>
<dbReference type="PhylomeDB" id="Q5SM16"/>
<dbReference type="BRENDA" id="2.1.1.34">
    <property type="organism ID" value="2305"/>
</dbReference>
<dbReference type="SABIO-RK" id="Q5SM16"/>
<dbReference type="EvolutionaryTrace" id="Q5SM16"/>
<dbReference type="Proteomes" id="UP000000532">
    <property type="component" value="Chromosome"/>
</dbReference>
<dbReference type="GO" id="GO:0141100">
    <property type="term" value="F:tRNA (guanine(18)-2'-O)-methyltransferase activity"/>
    <property type="evidence" value="ECO:0007669"/>
    <property type="project" value="UniProtKB-UniRule"/>
</dbReference>
<dbReference type="GO" id="GO:0000049">
    <property type="term" value="F:tRNA binding"/>
    <property type="evidence" value="ECO:0007669"/>
    <property type="project" value="UniProtKB-UniRule"/>
</dbReference>
<dbReference type="GO" id="GO:0002938">
    <property type="term" value="P:tRNA guanine ribose methylation"/>
    <property type="evidence" value="ECO:0000314"/>
    <property type="project" value="UniProtKB"/>
</dbReference>
<dbReference type="CDD" id="cd18092">
    <property type="entry name" value="SpoU-like_TrmH"/>
    <property type="match status" value="1"/>
</dbReference>
<dbReference type="Gene3D" id="3.40.1280.10">
    <property type="match status" value="1"/>
</dbReference>
<dbReference type="HAMAP" id="MF_02060">
    <property type="entry name" value="tRNA_methyltr_TrmH"/>
    <property type="match status" value="1"/>
</dbReference>
<dbReference type="InterPro" id="IPR029028">
    <property type="entry name" value="Alpha/beta_knot_MTases"/>
</dbReference>
<dbReference type="InterPro" id="IPR022724">
    <property type="entry name" value="rRNA_MeTrfase_SpoU_C"/>
</dbReference>
<dbReference type="InterPro" id="IPR001537">
    <property type="entry name" value="SpoU_MeTrfase"/>
</dbReference>
<dbReference type="InterPro" id="IPR033671">
    <property type="entry name" value="TrmH"/>
</dbReference>
<dbReference type="InterPro" id="IPR029026">
    <property type="entry name" value="tRNA_m1G_MTases_N"/>
</dbReference>
<dbReference type="NCBIfam" id="NF008295">
    <property type="entry name" value="PRK11081.1"/>
    <property type="match status" value="1"/>
</dbReference>
<dbReference type="PANTHER" id="PTHR43453">
    <property type="entry name" value="RRNA METHYLASE-LIKE"/>
    <property type="match status" value="1"/>
</dbReference>
<dbReference type="PANTHER" id="PTHR43453:SF1">
    <property type="entry name" value="TRNA_RRNA METHYLTRANSFERASE SPOU TYPE DOMAIN-CONTAINING PROTEIN"/>
    <property type="match status" value="1"/>
</dbReference>
<dbReference type="Pfam" id="PF12105">
    <property type="entry name" value="SpoU_methylas_C"/>
    <property type="match status" value="1"/>
</dbReference>
<dbReference type="Pfam" id="PF00588">
    <property type="entry name" value="SpoU_methylase"/>
    <property type="match status" value="1"/>
</dbReference>
<dbReference type="SUPFAM" id="SSF75217">
    <property type="entry name" value="alpha/beta knot"/>
    <property type="match status" value="1"/>
</dbReference>
<proteinExistence type="evidence at protein level"/>
<sequence>MRERTEARRRRIEEVLRRRQPDLTVLLENVHKPHNLSAILRTCDAVGVLEAHAVNPTGGVPTFNETSGGSHKWVYLRVHPDLHEAFRFLKERGFTVYATALREDARDFREVDYTKPTAVLFGAEKWGVSEEALALADGAIKIPMLGMVQSLNVSVAAAVILFEAQRQRLKAGLYDRPRLDPELYQKVLADWLRK</sequence>
<protein>
    <recommendedName>
        <fullName evidence="1 7">tRNA (guanosine(18)-2'-O)-methyltransferase</fullName>
        <ecNumber evidence="1 2 3 4 5">2.1.1.34</ecNumber>
    </recommendedName>
    <alternativeName>
        <fullName evidence="1 7">tRNA [Gm18] methyltransferase</fullName>
    </alternativeName>
</protein>
<comment type="function">
    <text evidence="2 3 4 5">Catalyzes the 2'-O methylation of guanosine at position 18 in tRNA. Type I methylase, which methylates all tRNAs.</text>
</comment>
<comment type="catalytic activity">
    <reaction evidence="1 2 3 4 5">
        <text>guanosine(18) in tRNA + S-adenosyl-L-methionine = 2'-O-methylguanosine(18) in tRNA + S-adenosyl-L-homocysteine + H(+)</text>
        <dbReference type="Rhea" id="RHEA:20077"/>
        <dbReference type="Rhea" id="RHEA-COMP:10190"/>
        <dbReference type="Rhea" id="RHEA-COMP:10192"/>
        <dbReference type="ChEBI" id="CHEBI:15378"/>
        <dbReference type="ChEBI" id="CHEBI:57856"/>
        <dbReference type="ChEBI" id="CHEBI:59789"/>
        <dbReference type="ChEBI" id="CHEBI:74269"/>
        <dbReference type="ChEBI" id="CHEBI:74445"/>
        <dbReference type="EC" id="2.1.1.34"/>
    </reaction>
</comment>
<comment type="biophysicochemical properties">
    <kinetics>
        <KM evidence="3">10 uM for S-adenosyl-L-methionine</KM>
        <Vmax evidence="3">10.0 umol/h/mg enzyme</Vmax>
    </kinetics>
</comment>
<comment type="subunit">
    <text evidence="3">Homodimer.</text>
</comment>
<comment type="domain">
    <text evidence="5">Both N- and C-terminal regions function in tRNA binding, but the substrate tRNA is determined by the catalytic domain.</text>
</comment>
<comment type="miscellaneous">
    <text evidence="4">Binding of TrmH to tRNA is composed of at least three steps: the first is bi-molecular binding and the subsequent two are uni-molecular induced-fit processes.</text>
</comment>
<comment type="similarity">
    <text evidence="1 7">Belongs to the class IV-like SAM-binding methyltransferase superfamily. RNA methyltransferase TrmH family.</text>
</comment>
<organism>
    <name type="scientific">Thermus thermophilus (strain ATCC 27634 / DSM 579 / HB8)</name>
    <dbReference type="NCBI Taxonomy" id="300852"/>
    <lineage>
        <taxon>Bacteria</taxon>
        <taxon>Thermotogati</taxon>
        <taxon>Deinococcota</taxon>
        <taxon>Deinococci</taxon>
        <taxon>Thermales</taxon>
        <taxon>Thermaceae</taxon>
        <taxon>Thermus</taxon>
    </lineage>
</organism>
<keyword id="KW-0002">3D-structure</keyword>
<keyword id="KW-0489">Methyltransferase</keyword>
<keyword id="KW-1185">Reference proteome</keyword>
<keyword id="KW-0694">RNA-binding</keyword>
<keyword id="KW-0949">S-adenosyl-L-methionine</keyword>
<keyword id="KW-0808">Transferase</keyword>
<keyword id="KW-0819">tRNA processing</keyword>
<keyword id="KW-0820">tRNA-binding</keyword>